<protein>
    <recommendedName>
        <fullName>Exportin-T</fullName>
    </recommendedName>
    <alternativeName>
        <fullName>Exportin(tRNA)</fullName>
    </alternativeName>
    <alternativeName>
        <fullName>Karyopherin-beta</fullName>
    </alternativeName>
    <alternativeName>
        <fullName>tRNA exportin</fullName>
    </alternativeName>
</protein>
<organism>
    <name type="scientific">Laccaria bicolor (strain S238N-H82 / ATCC MYA-4686)</name>
    <name type="common">Bicoloured deceiver</name>
    <name type="synonym">Laccaria laccata var. bicolor</name>
    <dbReference type="NCBI Taxonomy" id="486041"/>
    <lineage>
        <taxon>Eukaryota</taxon>
        <taxon>Fungi</taxon>
        <taxon>Dikarya</taxon>
        <taxon>Basidiomycota</taxon>
        <taxon>Agaricomycotina</taxon>
        <taxon>Agaricomycetes</taxon>
        <taxon>Agaricomycetidae</taxon>
        <taxon>Agaricales</taxon>
        <taxon>Agaricineae</taxon>
        <taxon>Hydnangiaceae</taxon>
        <taxon>Laccaria</taxon>
    </lineage>
</organism>
<accession>B0DAD3</accession>
<comment type="function">
    <text evidence="1">tRNA nucleus export receptor which facilitates tRNA translocation across the nuclear pore complex. Involved in pre-tRNA splicing, probably by affecting the interaction of pre-tRNA with splicing endonuclease (By similarity).</text>
</comment>
<comment type="subcellular location">
    <subcellularLocation>
        <location evidence="1">Nucleus</location>
    </subcellularLocation>
    <subcellularLocation>
        <location evidence="1">Cytoplasm</location>
    </subcellularLocation>
    <text evidence="1">Shuttles between the nucleus and the cytoplasm.</text>
</comment>
<comment type="similarity">
    <text evidence="2">Belongs to the exportin family.</text>
</comment>
<dbReference type="EMBL" id="DS547101">
    <property type="protein sequence ID" value="EDR08512.1"/>
    <property type="molecule type" value="Genomic_DNA"/>
</dbReference>
<dbReference type="RefSeq" id="XP_001880737.1">
    <property type="nucleotide sequence ID" value="XM_001880702.1"/>
</dbReference>
<dbReference type="SMR" id="B0DAD3"/>
<dbReference type="FunCoup" id="B0DAD3">
    <property type="interactions" value="670"/>
</dbReference>
<dbReference type="STRING" id="486041.B0DAD3"/>
<dbReference type="GeneID" id="6076358"/>
<dbReference type="KEGG" id="lbc:LACBIDRAFT_249920"/>
<dbReference type="HOGENOM" id="CLU_004414_0_0_1"/>
<dbReference type="InParanoid" id="B0DAD3"/>
<dbReference type="OrthoDB" id="26399at2759"/>
<dbReference type="Proteomes" id="UP000001194">
    <property type="component" value="Unassembled WGS sequence"/>
</dbReference>
<dbReference type="GO" id="GO:0005737">
    <property type="term" value="C:cytoplasm"/>
    <property type="evidence" value="ECO:0007669"/>
    <property type="project" value="UniProtKB-SubCell"/>
</dbReference>
<dbReference type="GO" id="GO:0016363">
    <property type="term" value="C:nuclear matrix"/>
    <property type="evidence" value="ECO:0007669"/>
    <property type="project" value="TreeGrafter"/>
</dbReference>
<dbReference type="GO" id="GO:0005643">
    <property type="term" value="C:nuclear pore"/>
    <property type="evidence" value="ECO:0007669"/>
    <property type="project" value="TreeGrafter"/>
</dbReference>
<dbReference type="GO" id="GO:0031267">
    <property type="term" value="F:small GTPase binding"/>
    <property type="evidence" value="ECO:0007669"/>
    <property type="project" value="InterPro"/>
</dbReference>
<dbReference type="GO" id="GO:0000049">
    <property type="term" value="F:tRNA binding"/>
    <property type="evidence" value="ECO:0007669"/>
    <property type="project" value="UniProtKB-KW"/>
</dbReference>
<dbReference type="GO" id="GO:0008033">
    <property type="term" value="P:tRNA processing"/>
    <property type="evidence" value="ECO:0007669"/>
    <property type="project" value="UniProtKB-KW"/>
</dbReference>
<dbReference type="GO" id="GO:0071528">
    <property type="term" value="P:tRNA re-export from nucleus"/>
    <property type="evidence" value="ECO:0007669"/>
    <property type="project" value="InterPro"/>
</dbReference>
<dbReference type="Gene3D" id="1.25.10.10">
    <property type="entry name" value="Leucine-rich Repeat Variant"/>
    <property type="match status" value="1"/>
</dbReference>
<dbReference type="InterPro" id="IPR011989">
    <property type="entry name" value="ARM-like"/>
</dbReference>
<dbReference type="InterPro" id="IPR016024">
    <property type="entry name" value="ARM-type_fold"/>
</dbReference>
<dbReference type="InterPro" id="IPR013598">
    <property type="entry name" value="Exportin-1/Importin-b-like"/>
</dbReference>
<dbReference type="InterPro" id="IPR045546">
    <property type="entry name" value="Exportin-T_C"/>
</dbReference>
<dbReference type="InterPro" id="IPR040017">
    <property type="entry name" value="XPOT"/>
</dbReference>
<dbReference type="PANTHER" id="PTHR15952:SF11">
    <property type="entry name" value="EXPORTIN-T"/>
    <property type="match status" value="1"/>
</dbReference>
<dbReference type="PANTHER" id="PTHR15952">
    <property type="entry name" value="EXPORTIN-T/LOS1"/>
    <property type="match status" value="1"/>
</dbReference>
<dbReference type="Pfam" id="PF19282">
    <property type="entry name" value="Exportin-T"/>
    <property type="match status" value="1"/>
</dbReference>
<dbReference type="Pfam" id="PF08389">
    <property type="entry name" value="Xpo1"/>
    <property type="match status" value="1"/>
</dbReference>
<dbReference type="SUPFAM" id="SSF48371">
    <property type="entry name" value="ARM repeat"/>
    <property type="match status" value="1"/>
</dbReference>
<evidence type="ECO:0000250" key="1"/>
<evidence type="ECO:0000305" key="2"/>
<sequence length="1066" mass="120178">MEQEIDQIVQAITIASDPTQASLYQQALAYISTIQQNANETWRLALHIFVDQNTEGHRKHPAQARFFALRVLDEFFDNRFEPLDHESFQAIHQALTAYIQSEYVVGSAEADASFLRNKFSHTLTLFFLCTYIDQWPSFFTDLFTLIRPTESATRSNFNRHISLLFFHIVLEISGEVADQIIKSARPYNAARHARDARVRDAVRDRDAARINAAVLTIVVEGAEQMANLHKSETSSRGPRELEGAVEVVDWGIRTFGSYVGWIDINLTVTPTTVPLLFNLLADSSLPIRLATSVSLLRIVSKGLKEPGDKLQLLKVLSLGQVLDALEAKTRAQQIEREESYREALGKLLNVLGLELAKLVDDCSDEDIRAEASTYITQIQPVMLRFMADEYDDTCSTVFPLLQNILTTYKRHRKISSNPLDESKRSFLASLLQVLLAKMKWEEDADPEDADEDDNAEFDKMRKELRTFLDSILAIDQVLVTDAVKTLALDTITAFKNGVSIKWNDAELGVYLVFIFGEINKSMTRIAGGKGRAAFCQAPAVVDKDKRKATDYSDYPLTTHGEMLLALVQSGVASFPHRTVSLQFFETASRYTDFFKIRKDCIIPTLEAMIDTRGLHNENLNFRSRLFYLFHRFIKESRNEIPPHISGNIIDSMRDLLLIEVEIPAAEDTEIDPLSEAIKNSQFDSQLYLFETAGILTSLLCKTPTQQTAMLLSLVKPLMDDLSVSLQAFSKGGQDLLPIVKVHHIIMALGNIAKGFPDYPTSIPEGHILPPLEIFTEVAQAILVCLEAMNVYKPIRDATRFAFARILATTGPTVTSYIPQLMGNLLAHFEPTELVDFMNFIGLLIHKLQKDMFDVLDQLIGPLSAHITSLLTQPVSGTDEHRAHIETKRAYLALLNNIMASKLDGIFTSERNSSNFEVLLESMQRLAEDVSDPASEKTAIMFLNRSVTVWGQPSSSENGRETGHGLPGFERFIYERLVQTCFRVPSLPQFNLKDGQMMVVLHEIANLLQVICKIRGHEAYNFFISVFLPSQNWPSETALDFMTKLRDLDGKGFRKYFTELIRSSRTS</sequence>
<name>XPOT_LACBS</name>
<keyword id="KW-0963">Cytoplasm</keyword>
<keyword id="KW-0539">Nucleus</keyword>
<keyword id="KW-1185">Reference proteome</keyword>
<keyword id="KW-0694">RNA-binding</keyword>
<keyword id="KW-0813">Transport</keyword>
<keyword id="KW-0819">tRNA processing</keyword>
<keyword id="KW-0820">tRNA-binding</keyword>
<feature type="chain" id="PRO_0000343095" description="Exportin-T">
    <location>
        <begin position="1"/>
        <end position="1066"/>
    </location>
</feature>
<reference key="1">
    <citation type="journal article" date="2008" name="Nature">
        <title>The genome of Laccaria bicolor provides insights into mycorrhizal symbiosis.</title>
        <authorList>
            <person name="Martin F."/>
            <person name="Aerts A."/>
            <person name="Ahren D."/>
            <person name="Brun A."/>
            <person name="Danchin E.G.J."/>
            <person name="Duchaussoy F."/>
            <person name="Gibon J."/>
            <person name="Kohler A."/>
            <person name="Lindquist E."/>
            <person name="Pereda V."/>
            <person name="Salamov A."/>
            <person name="Shapiro H.J."/>
            <person name="Wuyts J."/>
            <person name="Blaudez D."/>
            <person name="Buee M."/>
            <person name="Brokstein P."/>
            <person name="Canbaeck B."/>
            <person name="Cohen D."/>
            <person name="Courty P.E."/>
            <person name="Coutinho P.M."/>
            <person name="Delaruelle C."/>
            <person name="Detter J.C."/>
            <person name="Deveau A."/>
            <person name="DiFazio S."/>
            <person name="Duplessis S."/>
            <person name="Fraissinet-Tachet L."/>
            <person name="Lucic E."/>
            <person name="Frey-Klett P."/>
            <person name="Fourrey C."/>
            <person name="Feussner I."/>
            <person name="Gay G."/>
            <person name="Grimwood J."/>
            <person name="Hoegger P.J."/>
            <person name="Jain P."/>
            <person name="Kilaru S."/>
            <person name="Labbe J."/>
            <person name="Lin Y.C."/>
            <person name="Legue V."/>
            <person name="Le Tacon F."/>
            <person name="Marmeisse R."/>
            <person name="Melayah D."/>
            <person name="Montanini B."/>
            <person name="Muratet M."/>
            <person name="Nehls U."/>
            <person name="Niculita-Hirzel H."/>
            <person name="Oudot-Le Secq M.P."/>
            <person name="Peter M."/>
            <person name="Quesneville H."/>
            <person name="Rajashekar B."/>
            <person name="Reich M."/>
            <person name="Rouhier N."/>
            <person name="Schmutz J."/>
            <person name="Yin T."/>
            <person name="Chalot M."/>
            <person name="Henrissat B."/>
            <person name="Kuees U."/>
            <person name="Lucas S."/>
            <person name="Van de Peer Y."/>
            <person name="Podila G.K."/>
            <person name="Polle A."/>
            <person name="Pukkila P.J."/>
            <person name="Richardson P.M."/>
            <person name="Rouze P."/>
            <person name="Sanders I.R."/>
            <person name="Stajich J.E."/>
            <person name="Tunlid A."/>
            <person name="Tuskan G."/>
            <person name="Grigoriev I.V."/>
        </authorList>
    </citation>
    <scope>NUCLEOTIDE SEQUENCE [LARGE SCALE GENOMIC DNA]</scope>
    <source>
        <strain>S238N-H82 / ATCC MYA-4686</strain>
    </source>
</reference>
<gene>
    <name type="primary">LOS1</name>
    <name type="ORF">LACBIDRAFT_249920</name>
</gene>
<proteinExistence type="inferred from homology"/>